<gene>
    <name evidence="1" type="primary">eIF3a</name>
    <name evidence="1" type="synonym">eIF3-S10</name>
    <name type="ORF">GG11565</name>
</gene>
<keyword id="KW-0963">Cytoplasm</keyword>
<keyword id="KW-0396">Initiation factor</keyword>
<keyword id="KW-0597">Phosphoprotein</keyword>
<keyword id="KW-0648">Protein biosynthesis</keyword>
<keyword id="KW-0694">RNA-binding</keyword>
<feature type="chain" id="PRO_0000366335" description="Eukaryotic translation initiation factor 3 subunit A">
    <location>
        <begin position="1"/>
        <end position="1135"/>
    </location>
</feature>
<feature type="domain" description="PCI" evidence="2">
    <location>
        <begin position="319"/>
        <end position="501"/>
    </location>
</feature>
<feature type="region of interest" description="Disordered" evidence="3">
    <location>
        <begin position="588"/>
        <end position="631"/>
    </location>
</feature>
<feature type="region of interest" description="Disordered" evidence="3">
    <location>
        <begin position="829"/>
        <end position="1135"/>
    </location>
</feature>
<feature type="compositionally biased region" description="Basic and acidic residues" evidence="3">
    <location>
        <begin position="588"/>
        <end position="623"/>
    </location>
</feature>
<feature type="compositionally biased region" description="Basic and acidic residues" evidence="3">
    <location>
        <begin position="829"/>
        <end position="899"/>
    </location>
</feature>
<feature type="compositionally biased region" description="Basic and acidic residues" evidence="3">
    <location>
        <begin position="920"/>
        <end position="971"/>
    </location>
</feature>
<feature type="compositionally biased region" description="Basic and acidic residues" evidence="3">
    <location>
        <begin position="985"/>
        <end position="1045"/>
    </location>
</feature>
<feature type="compositionally biased region" description="Basic and acidic residues" evidence="3">
    <location>
        <begin position="1053"/>
        <end position="1081"/>
    </location>
</feature>
<feature type="compositionally biased region" description="Basic and acidic residues" evidence="3">
    <location>
        <begin position="1104"/>
        <end position="1125"/>
    </location>
</feature>
<feature type="modified residue" description="Phosphoserine" evidence="1">
    <location>
        <position position="908"/>
    </location>
</feature>
<name>EIF3A_DROER</name>
<proteinExistence type="inferred from homology"/>
<dbReference type="EMBL" id="CH954181">
    <property type="protein sequence ID" value="EDV47784.1"/>
    <property type="molecule type" value="Genomic_DNA"/>
</dbReference>
<dbReference type="SMR" id="B3P211"/>
<dbReference type="EnsemblMetazoa" id="FBtr0131619">
    <property type="protein sequence ID" value="FBpp0130111"/>
    <property type="gene ID" value="FBgn0103862"/>
</dbReference>
<dbReference type="EnsemblMetazoa" id="XM_001978790.3">
    <property type="protein sequence ID" value="XP_001978826.1"/>
    <property type="gene ID" value="LOC6552153"/>
</dbReference>
<dbReference type="GeneID" id="6552153"/>
<dbReference type="KEGG" id="der:6552153"/>
<dbReference type="CTD" id="8661"/>
<dbReference type="eggNOG" id="KOG2072">
    <property type="taxonomic scope" value="Eukaryota"/>
</dbReference>
<dbReference type="HOGENOM" id="CLU_002096_1_0_1"/>
<dbReference type="OMA" id="EHITNKR"/>
<dbReference type="OrthoDB" id="18884at2759"/>
<dbReference type="PhylomeDB" id="B3P211"/>
<dbReference type="ChiTaRS" id="eIF3-S10">
    <property type="organism name" value="fly"/>
</dbReference>
<dbReference type="Proteomes" id="UP000008711">
    <property type="component" value="Unassembled WGS sequence"/>
</dbReference>
<dbReference type="GO" id="GO:0016282">
    <property type="term" value="C:eukaryotic 43S preinitiation complex"/>
    <property type="evidence" value="ECO:0007669"/>
    <property type="project" value="UniProtKB-UniRule"/>
</dbReference>
<dbReference type="GO" id="GO:0033290">
    <property type="term" value="C:eukaryotic 48S preinitiation complex"/>
    <property type="evidence" value="ECO:0007669"/>
    <property type="project" value="UniProtKB-UniRule"/>
</dbReference>
<dbReference type="GO" id="GO:0005852">
    <property type="term" value="C:eukaryotic translation initiation factor 3 complex"/>
    <property type="evidence" value="ECO:0000250"/>
    <property type="project" value="UniProtKB"/>
</dbReference>
<dbReference type="GO" id="GO:0071540">
    <property type="term" value="C:eukaryotic translation initiation factor 3 complex, eIF3e"/>
    <property type="evidence" value="ECO:0007669"/>
    <property type="project" value="TreeGrafter"/>
</dbReference>
<dbReference type="GO" id="GO:0071541">
    <property type="term" value="C:eukaryotic translation initiation factor 3 complex, eIF3m"/>
    <property type="evidence" value="ECO:0007669"/>
    <property type="project" value="TreeGrafter"/>
</dbReference>
<dbReference type="GO" id="GO:0043614">
    <property type="term" value="C:multi-eIF complex"/>
    <property type="evidence" value="ECO:0007669"/>
    <property type="project" value="TreeGrafter"/>
</dbReference>
<dbReference type="GO" id="GO:0003729">
    <property type="term" value="F:mRNA binding"/>
    <property type="evidence" value="ECO:0007669"/>
    <property type="project" value="TreeGrafter"/>
</dbReference>
<dbReference type="GO" id="GO:0003743">
    <property type="term" value="F:translation initiation factor activity"/>
    <property type="evidence" value="ECO:0000250"/>
    <property type="project" value="UniProtKB"/>
</dbReference>
<dbReference type="GO" id="GO:0001732">
    <property type="term" value="P:formation of cytoplasmic translation initiation complex"/>
    <property type="evidence" value="ECO:0007669"/>
    <property type="project" value="UniProtKB-UniRule"/>
</dbReference>
<dbReference type="GO" id="GO:0006446">
    <property type="term" value="P:regulation of translational initiation"/>
    <property type="evidence" value="ECO:0000250"/>
    <property type="project" value="UniProtKB"/>
</dbReference>
<dbReference type="GO" id="GO:0002188">
    <property type="term" value="P:translation reinitiation"/>
    <property type="evidence" value="ECO:0007669"/>
    <property type="project" value="TreeGrafter"/>
</dbReference>
<dbReference type="FunFam" id="1.25.40.860:FF:000007">
    <property type="entry name" value="Eukaryotic translation initiation factor 3 subunit A"/>
    <property type="match status" value="1"/>
</dbReference>
<dbReference type="FunFam" id="4.10.860.10:FF:000001">
    <property type="entry name" value="Eukaryotic translation initiation factor 3 subunit A"/>
    <property type="match status" value="1"/>
</dbReference>
<dbReference type="Gene3D" id="1.25.40.860">
    <property type="match status" value="2"/>
</dbReference>
<dbReference type="Gene3D" id="4.10.860.10">
    <property type="entry name" value="UVR domain"/>
    <property type="match status" value="1"/>
</dbReference>
<dbReference type="HAMAP" id="MF_03000">
    <property type="entry name" value="eIF3a"/>
    <property type="match status" value="1"/>
</dbReference>
<dbReference type="InterPro" id="IPR027512">
    <property type="entry name" value="EIF3A"/>
</dbReference>
<dbReference type="InterPro" id="IPR054711">
    <property type="entry name" value="eIF3a_PCI_TPR-like"/>
</dbReference>
<dbReference type="InterPro" id="IPR000717">
    <property type="entry name" value="PCI_dom"/>
</dbReference>
<dbReference type="PANTHER" id="PTHR14005:SF0">
    <property type="entry name" value="EUKARYOTIC TRANSLATION INITIATION FACTOR 3 SUBUNIT A"/>
    <property type="match status" value="1"/>
</dbReference>
<dbReference type="PANTHER" id="PTHR14005">
    <property type="entry name" value="EUKARYOTIC TRANSLATION INITIATION FACTOR 3, THETA SUBUNIT"/>
    <property type="match status" value="1"/>
</dbReference>
<dbReference type="Pfam" id="PF22591">
    <property type="entry name" value="eIF3a_PCI_TPR-like"/>
    <property type="match status" value="1"/>
</dbReference>
<dbReference type="Pfam" id="PF01399">
    <property type="entry name" value="PCI"/>
    <property type="match status" value="1"/>
</dbReference>
<dbReference type="SMART" id="SM00088">
    <property type="entry name" value="PINT"/>
    <property type="match status" value="1"/>
</dbReference>
<dbReference type="PROSITE" id="PS50250">
    <property type="entry name" value="PCI"/>
    <property type="match status" value="1"/>
</dbReference>
<protein>
    <recommendedName>
        <fullName evidence="1">Eukaryotic translation initiation factor 3 subunit A</fullName>
        <shortName evidence="1">eIF3a</shortName>
    </recommendedName>
    <alternativeName>
        <fullName evidence="1">Eukaryotic translation initiation factor 3 subunit 10</fullName>
    </alternativeName>
</protein>
<organism>
    <name type="scientific">Drosophila erecta</name>
    <name type="common">Fruit fly</name>
    <dbReference type="NCBI Taxonomy" id="7220"/>
    <lineage>
        <taxon>Eukaryota</taxon>
        <taxon>Metazoa</taxon>
        <taxon>Ecdysozoa</taxon>
        <taxon>Arthropoda</taxon>
        <taxon>Hexapoda</taxon>
        <taxon>Insecta</taxon>
        <taxon>Pterygota</taxon>
        <taxon>Neoptera</taxon>
        <taxon>Endopterygota</taxon>
        <taxon>Diptera</taxon>
        <taxon>Brachycera</taxon>
        <taxon>Muscomorpha</taxon>
        <taxon>Ephydroidea</taxon>
        <taxon>Drosophilidae</taxon>
        <taxon>Drosophila</taxon>
        <taxon>Sophophora</taxon>
    </lineage>
</organism>
<reference key="1">
    <citation type="journal article" date="2007" name="Nature">
        <title>Evolution of genes and genomes on the Drosophila phylogeny.</title>
        <authorList>
            <consortium name="Drosophila 12 genomes consortium"/>
        </authorList>
    </citation>
    <scope>NUCLEOTIDE SEQUENCE [LARGE SCALE GENOMIC DNA]</scope>
    <source>
        <strain>Tucson 14021-0224.01</strain>
    </source>
</reference>
<evidence type="ECO:0000255" key="1">
    <source>
        <dbReference type="HAMAP-Rule" id="MF_03000"/>
    </source>
</evidence>
<evidence type="ECO:0000255" key="2">
    <source>
        <dbReference type="PROSITE-ProRule" id="PRU01185"/>
    </source>
</evidence>
<evidence type="ECO:0000256" key="3">
    <source>
        <dbReference type="SAM" id="MobiDB-lite"/>
    </source>
</evidence>
<comment type="function">
    <text evidence="1">RNA-binding component of the eukaryotic translation initiation factor 3 (eIF-3) complex, which is involved in protein synthesis of a specialized repertoire of mRNAs and, together with other initiation factors, stimulates binding of mRNA and methionyl-tRNAi to the 40S ribosome. The eIF-3 complex specifically targets and initiates translation of a subset of mRNAs involved in cell proliferation.</text>
</comment>
<comment type="subunit">
    <text evidence="1">Component of the eukaryotic translation initiation factor 3 (eIF-3) complex. The eIF-3 complex interacts with pix.</text>
</comment>
<comment type="subcellular location">
    <subcellularLocation>
        <location evidence="1">Cytoplasm</location>
    </subcellularLocation>
</comment>
<comment type="similarity">
    <text evidence="1">Belongs to the eIF-3 subunit A family.</text>
</comment>
<sequence>MARYTQRPENALKRANEFIEVGKPLRALDTLQEVFRNKRWNYAYSETVIEPLMFKYLYLCVELKKSHIAKEGLFQYRNMFQLVNVNSLENVIRGYLKMAEEHTEAAQAQSSAAVAVLELDDLDNIATPESILMSAVCGEDAQDRSDRTILLPWVKFLWESYCQCLELLRVNTHCEALYHDIARMAFQFCLKYNRKSEFRRLCDKLRKHLEDICKSSNQTTGVSINKVETQQLCLDTRLYLLDSAIQMELWQEAYKAIEDIHGLMALSKKTPVPKTMANYYQKLAMVFSKAGNQLFHAAALLKLFQLTRELKKNLTKDDLQRMAAHVLLATLSIPLPSAHPEFDRFIEADKSPLEKAQKLAVLLGLPQPPTRVSLIREVVRLNVPQLVSEDFRNLYNWLEVDFNPLNLCKRIQSIVDFIENGSENALLTPYIQSLKDVTIMRLIRQISQVYESIQFQRLLQLASFCNIFELEKLLVESVRHNDMQIRIDHQKNSIYFGTDLTESQREYRPDGPALQSMPSEQIRSQLVNMSTVLTRAVSIVYPNRERDQRAKLRTQMVNHYHEIKDREHQRILQRQKIIEDRKEYIEKQNNAREEEEARRQEEESRKAKLAEQKRLEQEQEERERKRHQNEIQAIREKSLKEKVQQISQTAHGKKMLSKLDEEGIKKLDAEQIAKRESEELQREAKELQSKLKSQEKKIDYFERAKRLEEIPLFEKYLAEKQVKDKEFWEATEKTRIENAIAERKDAVGQQERLKRMYPDRDEFLEALKKERASLYVEKLRKFEAALEAERKKRLADRIIRRREERRQAFLREKEEERLRKEEEIRLAQAAEERAAAEARRLEREADDEKRRAQYEKQRAKEEEAERKIKEDRERLARDLASERERTEKERDTWRPRGGDRPSAPAVGSGEWRRAAPTASERNERGGERIERGGDRIERGGERIERGGDRDRDRKDNEGADSSWRVRREPDSQRAAAPKDSNAQQSRDDKWRRGGERDRDFRNDGPRRDRDDGPRRERDDGPRRDRDDERGFRRNDGPRRTEEPQRETGGNWRDAPRNADRENRRPAGERRDRDVRETRGDQRGSAPKEASSGGGGGNWRTAPAAREEKPASKRDQPQEKENKAADDGEWTSVKRR</sequence>
<accession>B3P211</accession>